<reference key="1">
    <citation type="journal article" date="2004" name="Genome">
        <title>Evolution of cow nonstomach lysozyme genes.</title>
        <authorList>
            <person name="Irwin D.M."/>
        </authorList>
    </citation>
    <scope>NUCLEOTIDE SEQUENCE [MRNA]</scope>
</reference>
<reference key="2">
    <citation type="submission" date="2005-08" db="EMBL/GenBank/DDBJ databases">
        <authorList>
            <consortium name="NIH - Mammalian Gene Collection (MGC) project"/>
        </authorList>
    </citation>
    <scope>NUCLEOTIDE SEQUENCE [LARGE SCALE MRNA]</scope>
    <source>
        <strain>Crossbred X Angus</strain>
        <tissue>Ileum</tissue>
    </source>
</reference>
<name>LYSI_BOVIN</name>
<comment type="function">
    <text>Lysozymes have primarily a bacteriolytic function; those in tissues and body fluids are associated with the monocyte-macrophage system and enhance the activity of immunoagents.</text>
</comment>
<comment type="catalytic activity">
    <reaction>
        <text>Hydrolysis of (1-&gt;4)-beta-linkages between N-acetylmuramic acid and N-acetyl-D-glucosamine residues in a peptidoglycan and between N-acetyl-D-glucosamine residues in chitodextrins.</text>
        <dbReference type="EC" id="3.2.1.17"/>
    </reaction>
</comment>
<comment type="similarity">
    <text evidence="2">Belongs to the glycosyl hydrolase 22 family.</text>
</comment>
<keyword id="KW-0929">Antimicrobial</keyword>
<keyword id="KW-0081">Bacteriolytic enzyme</keyword>
<keyword id="KW-1015">Disulfide bond</keyword>
<keyword id="KW-0326">Glycosidase</keyword>
<keyword id="KW-0378">Hydrolase</keyword>
<keyword id="KW-1185">Reference proteome</keyword>
<keyword id="KW-0732">Signal</keyword>
<organism>
    <name type="scientific">Bos taurus</name>
    <name type="common">Bovine</name>
    <dbReference type="NCBI Taxonomy" id="9913"/>
    <lineage>
        <taxon>Eukaryota</taxon>
        <taxon>Metazoa</taxon>
        <taxon>Chordata</taxon>
        <taxon>Craniata</taxon>
        <taxon>Vertebrata</taxon>
        <taxon>Euteleostomi</taxon>
        <taxon>Mammalia</taxon>
        <taxon>Eutheria</taxon>
        <taxon>Laurasiatheria</taxon>
        <taxon>Artiodactyla</taxon>
        <taxon>Ruminantia</taxon>
        <taxon>Pecora</taxon>
        <taxon>Bovidae</taxon>
        <taxon>Bovinae</taxon>
        <taxon>Bos</taxon>
    </lineage>
</organism>
<proteinExistence type="evidence at transcript level"/>
<feature type="signal peptide" evidence="1">
    <location>
        <begin position="1"/>
        <end position="18"/>
    </location>
</feature>
<feature type="chain" id="PRO_0000246089" description="Lysozyme C, intestinal isozyme">
    <location>
        <begin position="19"/>
        <end position="147"/>
    </location>
</feature>
<feature type="domain" description="C-type lysozyme" evidence="2">
    <location>
        <begin position="19"/>
        <end position="147"/>
    </location>
</feature>
<feature type="active site" evidence="2">
    <location>
        <position position="53"/>
    </location>
</feature>
<feature type="active site" evidence="2">
    <location>
        <position position="71"/>
    </location>
</feature>
<feature type="disulfide bond" evidence="2">
    <location>
        <begin position="24"/>
        <end position="145"/>
    </location>
</feature>
<feature type="disulfide bond" evidence="2">
    <location>
        <begin position="48"/>
        <end position="133"/>
    </location>
</feature>
<feature type="disulfide bond" evidence="2">
    <location>
        <begin position="83"/>
        <end position="99"/>
    </location>
</feature>
<feature type="disulfide bond" evidence="2">
    <location>
        <begin position="95"/>
        <end position="113"/>
    </location>
</feature>
<accession>Q6B410</accession>
<sequence>MKAVLILGLLLLSVTVQGKKFEKCELARTLRRYGLDGYKGVSLANWMCLTYGESRYNTRVTNYNPGSKSTDYGIFQINSKWWCNDGKTPKAVNGCGVSCSAMLKDDITQAVACAKTIVSRQGITAWVAWKNKCRNRDVSSYIRGCKL</sequence>
<protein>
    <recommendedName>
        <fullName>Lysozyme C, intestinal isozyme</fullName>
        <ecNumber>3.2.1.17</ecNumber>
    </recommendedName>
    <alternativeName>
        <fullName>1,4-beta-N-acetylmuramidase C</fullName>
    </alternativeName>
</protein>
<evidence type="ECO:0000255" key="1"/>
<evidence type="ECO:0000255" key="2">
    <source>
        <dbReference type="PROSITE-ProRule" id="PRU00680"/>
    </source>
</evidence>
<dbReference type="EC" id="3.2.1.17"/>
<dbReference type="EMBL" id="AY684065">
    <property type="protein sequence ID" value="AAT92539.1"/>
    <property type="molecule type" value="mRNA"/>
</dbReference>
<dbReference type="EMBL" id="BC102281">
    <property type="protein sequence ID" value="AAI02282.1"/>
    <property type="molecule type" value="mRNA"/>
</dbReference>
<dbReference type="RefSeq" id="NP_001007806.1">
    <property type="nucleotide sequence ID" value="NM_001007805.1"/>
</dbReference>
<dbReference type="SMR" id="Q6B410"/>
<dbReference type="FunCoup" id="Q6B410">
    <property type="interactions" value="17"/>
</dbReference>
<dbReference type="STRING" id="9913.ENSBTAP00000027401"/>
<dbReference type="CAZy" id="GH22">
    <property type="family name" value="Glycoside Hydrolase Family 22"/>
</dbReference>
<dbReference type="PaxDb" id="9913-ENSBTAP00000027401"/>
<dbReference type="GeneID" id="493637"/>
<dbReference type="KEGG" id="bta:493637"/>
<dbReference type="CTD" id="38125"/>
<dbReference type="VEuPathDB" id="HostDB:ENSBTAG00000026323"/>
<dbReference type="eggNOG" id="ENOG502S1S1">
    <property type="taxonomic scope" value="Eukaryota"/>
</dbReference>
<dbReference type="HOGENOM" id="CLU_111620_0_1_1"/>
<dbReference type="InParanoid" id="Q6B410"/>
<dbReference type="OMA" id="RYWCKPS"/>
<dbReference type="OrthoDB" id="17373at2759"/>
<dbReference type="TreeFam" id="TF324882"/>
<dbReference type="Proteomes" id="UP000009136">
    <property type="component" value="Chromosome 5"/>
</dbReference>
<dbReference type="Bgee" id="ENSBTAG00000026323">
    <property type="expression patterns" value="Expressed in ascending colon and 59 other cell types or tissues"/>
</dbReference>
<dbReference type="GO" id="GO:0003796">
    <property type="term" value="F:lysozyme activity"/>
    <property type="evidence" value="ECO:0000318"/>
    <property type="project" value="GO_Central"/>
</dbReference>
<dbReference type="GO" id="GO:0050829">
    <property type="term" value="P:defense response to Gram-negative bacterium"/>
    <property type="evidence" value="ECO:0000318"/>
    <property type="project" value="GO_Central"/>
</dbReference>
<dbReference type="GO" id="GO:0050830">
    <property type="term" value="P:defense response to Gram-positive bacterium"/>
    <property type="evidence" value="ECO:0000318"/>
    <property type="project" value="GO_Central"/>
</dbReference>
<dbReference type="GO" id="GO:0031640">
    <property type="term" value="P:killing of cells of another organism"/>
    <property type="evidence" value="ECO:0007669"/>
    <property type="project" value="UniProtKB-KW"/>
</dbReference>
<dbReference type="CDD" id="cd16897">
    <property type="entry name" value="LYZ_C"/>
    <property type="match status" value="1"/>
</dbReference>
<dbReference type="FunFam" id="1.10.530.10:FF:000001">
    <property type="entry name" value="Lysozyme C"/>
    <property type="match status" value="1"/>
</dbReference>
<dbReference type="Gene3D" id="1.10.530.10">
    <property type="match status" value="1"/>
</dbReference>
<dbReference type="InterPro" id="IPR001916">
    <property type="entry name" value="Glyco_hydro_22"/>
</dbReference>
<dbReference type="InterPro" id="IPR019799">
    <property type="entry name" value="Glyco_hydro_22_CS"/>
</dbReference>
<dbReference type="InterPro" id="IPR000974">
    <property type="entry name" value="Glyco_hydro_22_lys"/>
</dbReference>
<dbReference type="InterPro" id="IPR023346">
    <property type="entry name" value="Lysozyme-like_dom_sf"/>
</dbReference>
<dbReference type="PANTHER" id="PTHR11407">
    <property type="entry name" value="LYSOZYME C"/>
    <property type="match status" value="1"/>
</dbReference>
<dbReference type="PANTHER" id="PTHR11407:SF28">
    <property type="entry name" value="LYSOZYME C"/>
    <property type="match status" value="1"/>
</dbReference>
<dbReference type="Pfam" id="PF00062">
    <property type="entry name" value="Lys"/>
    <property type="match status" value="1"/>
</dbReference>
<dbReference type="PRINTS" id="PR00137">
    <property type="entry name" value="LYSOZYME"/>
</dbReference>
<dbReference type="PRINTS" id="PR00135">
    <property type="entry name" value="LYZLACT"/>
</dbReference>
<dbReference type="SMART" id="SM00263">
    <property type="entry name" value="LYZ1"/>
    <property type="match status" value="1"/>
</dbReference>
<dbReference type="SUPFAM" id="SSF53955">
    <property type="entry name" value="Lysozyme-like"/>
    <property type="match status" value="1"/>
</dbReference>
<dbReference type="PROSITE" id="PS00128">
    <property type="entry name" value="GLYCOSYL_HYDROL_F22_1"/>
    <property type="match status" value="1"/>
</dbReference>
<dbReference type="PROSITE" id="PS51348">
    <property type="entry name" value="GLYCOSYL_HYDROL_F22_2"/>
    <property type="match status" value="1"/>
</dbReference>